<reference evidence="7" key="1">
    <citation type="journal article" date="2016" name="Plant J.">
        <title>The walnut (Juglans regia) genome sequence reveals diversity in genes coding for the biosynthesis of non-structural polyphenols.</title>
        <authorList>
            <person name="Martinez-Garcia P.J."/>
            <person name="Crepeau M.W."/>
            <person name="Puiu D."/>
            <person name="Gonzalez-Ibeas D."/>
            <person name="Whalen J."/>
            <person name="Stevens K.A."/>
            <person name="Paul R."/>
            <person name="Butterfield T.S."/>
            <person name="Britton M.T."/>
            <person name="Reagan R.L."/>
            <person name="Chakraborty S."/>
            <person name="Walawage S.L."/>
            <person name="Vasquez-Gross H.A."/>
            <person name="Cardeno C."/>
            <person name="Famula R.A."/>
            <person name="Pratt K."/>
            <person name="Kuruganti S."/>
            <person name="Aradhya M.K."/>
            <person name="Leslie C.A."/>
            <person name="Dandekar A.M."/>
            <person name="Salzberg S.L."/>
            <person name="Wegrzyn J.L."/>
            <person name="Langley C.H."/>
            <person name="Neale D.B."/>
        </authorList>
    </citation>
    <scope>NUCLEOTIDE SEQUENCE [LARGE SCALE GENOMIC DNA]</scope>
    <source>
        <strain evidence="7">cv. Chandler</strain>
    </source>
</reference>
<reference key="2">
    <citation type="journal article" date="2018" name="Sci. Rep.">
        <title>Jug r 6 is the allergenic vicilin present in walnut responsible for IgE cross-reactivities to other tree nuts and seeds.</title>
        <authorList>
            <person name="Dubiela P."/>
            <person name="Kabasser S."/>
            <person name="Smargiasso N."/>
            <person name="Geiselhart S."/>
            <person name="Bublin M."/>
            <person name="Hafner C."/>
            <person name="Mazzucchelli G."/>
            <person name="Hoffmann-Sommergruber K."/>
        </authorList>
    </citation>
    <scope>PROTEIN SEQUENCE OF 28-37; 45-65; 74-80; 81-124; 131-160; 161-210; 211-240; 241-260; 261-290; 291-320; 321-343; 344-354; 358-384; 394-400; 401-480 AND 481-502</scope>
    <scope>BIOPHYSICOCHEMICAL PROPERTIES</scope>
    <scope>SUBUNIT</scope>
    <scope>TISSUE SPECIFICITY</scope>
    <scope>PTM</scope>
    <scope>IDENTIFICATION BY MASS SPECTROMETRY</scope>
    <scope>MASS SPECTROMETRY</scope>
    <scope>ALLERGEN</scope>
    <scope>BIOTECHNOLOGY</scope>
    <scope>PROTEOLYTIC CLEAVAGE</scope>
    <scope>GLYCOSYLATION AT ASN-340</scope>
    <scope>CIRCULAR DICHROISM ANALYSIS</scope>
</reference>
<comment type="function">
    <text evidence="6">Seed storage protein.</text>
</comment>
<comment type="biophysicochemical properties">
    <temperatureDependence>
        <text evidence="3">Denaturation starts at 45 degrees Celsius. At temperatures above 75 degrees Celsius, begins to precipitate, and eventually becomes irreversibly denatured. Cannot be resolubilized in aqueous solution after being heated up to 95 degrees Celsius and then cooled down to 25 degrees Celsius.</text>
    </temperatureDependence>
</comment>
<comment type="subunit">
    <text evidence="3">Homotrimer.</text>
</comment>
<comment type="tissue specificity">
    <text evidence="3">Expressed in seed (at protein level).</text>
</comment>
<comment type="PTM">
    <text evidence="3">N-glycosylated; paucimannose-type structures containing xylose.</text>
</comment>
<comment type="mass spectrometry">
    <text>Non-glycosylated.</text>
</comment>
<comment type="mass spectrometry">
    <text>Glycosylated.</text>
</comment>
<comment type="allergen">
    <text evidence="3">Causes an allergic reaction in human. Natural protein binds to IgE in 26% of the 77 walnut-allergic patients tested. IgE-binding is reduced by simulated gastric fluid and in vitro duodenal digestion, but not by heat treatment. Cross-reacts with its counterparts from hazelnut (Cor a 11), pistachio and sesame.</text>
</comment>
<comment type="biotechnology">
    <text evidence="6">Could be used as a marker of IgE cross-reactivity among the vicilins of tree nuts in component resolved diagnosis.</text>
</comment>
<comment type="similarity">
    <text evidence="5">Belongs to the 7S seed storage protein family.</text>
</comment>
<protein>
    <recommendedName>
        <fullName evidence="5">Vicilin Jug r 6.0101</fullName>
    </recommendedName>
    <alternativeName>
        <fullName evidence="4">Allergen Jug r 6</fullName>
    </alternativeName>
    <alternativeName>
        <fullName evidence="4">Vicilin Jug r 6</fullName>
    </alternativeName>
    <allergenName evidence="5">Jug r 6.0101</allergenName>
</protein>
<gene>
    <name evidence="8" type="primary">LOC108986502</name>
</gene>
<name>VCL6_JUGRE</name>
<proteinExistence type="evidence at protein level"/>
<feature type="signal peptide" evidence="3">
    <location>
        <begin position="1"/>
        <end position="27"/>
    </location>
</feature>
<feature type="chain" id="PRO_5014181227" description="Vicilin Jug r 6.0101" evidence="6">
    <location>
        <begin position="28"/>
        <end position="502"/>
    </location>
</feature>
<feature type="domain" description="Cupin type-1 1" evidence="1">
    <location>
        <begin position="101"/>
        <end position="259"/>
    </location>
</feature>
<feature type="domain" description="Cupin type-1 2" evidence="1">
    <location>
        <begin position="302"/>
        <end position="475"/>
    </location>
</feature>
<feature type="region of interest" description="Disordered" evidence="2">
    <location>
        <begin position="67"/>
        <end position="100"/>
    </location>
</feature>
<feature type="region of interest" description="Disordered" evidence="2">
    <location>
        <begin position="374"/>
        <end position="401"/>
    </location>
</feature>
<feature type="compositionally biased region" description="Basic and acidic residues" evidence="2">
    <location>
        <begin position="67"/>
        <end position="84"/>
    </location>
</feature>
<feature type="compositionally biased region" description="Acidic residues" evidence="2">
    <location>
        <begin position="85"/>
        <end position="100"/>
    </location>
</feature>
<feature type="compositionally biased region" description="Low complexity" evidence="2">
    <location>
        <begin position="376"/>
        <end position="389"/>
    </location>
</feature>
<feature type="site" description="Cleavage" evidence="3">
    <location>
        <begin position="73"/>
        <end position="74"/>
    </location>
</feature>
<feature type="glycosylation site" description="N-linked (GlcNAc...) asparagine" evidence="3">
    <location>
        <position position="340"/>
    </location>
</feature>
<organism evidence="7">
    <name type="scientific">Juglans regia</name>
    <name type="common">English walnut</name>
    <dbReference type="NCBI Taxonomy" id="51240"/>
    <lineage>
        <taxon>Eukaryota</taxon>
        <taxon>Viridiplantae</taxon>
        <taxon>Streptophyta</taxon>
        <taxon>Embryophyta</taxon>
        <taxon>Tracheophyta</taxon>
        <taxon>Spermatophyta</taxon>
        <taxon>Magnoliopsida</taxon>
        <taxon>eudicotyledons</taxon>
        <taxon>Gunneridae</taxon>
        <taxon>Pentapetalae</taxon>
        <taxon>rosids</taxon>
        <taxon>fabids</taxon>
        <taxon>Fagales</taxon>
        <taxon>Juglandaceae</taxon>
        <taxon>Juglans</taxon>
    </lineage>
</organism>
<accession>A0A2I4E5L6</accession>
<dbReference type="RefSeq" id="XP_018814692.1">
    <property type="nucleotide sequence ID" value="XM_018959147.2"/>
</dbReference>
<dbReference type="SMR" id="A0A2I4E5L6"/>
<dbReference type="FunCoup" id="A0A2I4E5L6">
    <property type="interactions" value="270"/>
</dbReference>
<dbReference type="STRING" id="51240.A0A2I4E5L6"/>
<dbReference type="Allergome" id="12005">
    <property type="allergen name" value="Jug r 6"/>
</dbReference>
<dbReference type="Allergome" id="12006">
    <property type="allergen name" value="Jug r 6.0101"/>
</dbReference>
<dbReference type="GlyCosmos" id="A0A2I4E5L6">
    <property type="glycosylation" value="1 site, No reported glycans"/>
</dbReference>
<dbReference type="iPTMnet" id="A0A2I4E5L6"/>
<dbReference type="EnsemblPlants" id="Jr08_13930_p1">
    <property type="protein sequence ID" value="cds.Jr08_13930_p1"/>
    <property type="gene ID" value="Jr08_13930"/>
</dbReference>
<dbReference type="GeneID" id="108986502"/>
<dbReference type="Gramene" id="Jr08_13930_p1">
    <property type="protein sequence ID" value="cds.Jr08_13930_p1"/>
    <property type="gene ID" value="Jr08_13930"/>
</dbReference>
<dbReference type="KEGG" id="jre:108986502"/>
<dbReference type="InParanoid" id="A0A2I4E5L6"/>
<dbReference type="OrthoDB" id="1912756at2759"/>
<dbReference type="Proteomes" id="UP000235220">
    <property type="component" value="Chromosome 8"/>
</dbReference>
<dbReference type="GO" id="GO:0043245">
    <property type="term" value="C:extraorganismal space"/>
    <property type="evidence" value="ECO:0000314"/>
    <property type="project" value="UniProtKB"/>
</dbReference>
<dbReference type="GO" id="GO:0045735">
    <property type="term" value="F:nutrient reservoir activity"/>
    <property type="evidence" value="ECO:0000305"/>
    <property type="project" value="UniProtKB"/>
</dbReference>
<dbReference type="GO" id="GO:0070207">
    <property type="term" value="P:protein homotrimerization"/>
    <property type="evidence" value="ECO:0000314"/>
    <property type="project" value="UniProtKB"/>
</dbReference>
<dbReference type="GO" id="GO:0010431">
    <property type="term" value="P:seed maturation"/>
    <property type="evidence" value="ECO:0000270"/>
    <property type="project" value="UniProtKB"/>
</dbReference>
<dbReference type="CDD" id="cd02245">
    <property type="entry name" value="cupin_7S_vicilin-like_C"/>
    <property type="match status" value="1"/>
</dbReference>
<dbReference type="CDD" id="cd02244">
    <property type="entry name" value="cupin_7S_vicilin-like_N"/>
    <property type="match status" value="1"/>
</dbReference>
<dbReference type="Gene3D" id="2.60.120.10">
    <property type="entry name" value="Jelly Rolls"/>
    <property type="match status" value="2"/>
</dbReference>
<dbReference type="InterPro" id="IPR006045">
    <property type="entry name" value="Cupin_1"/>
</dbReference>
<dbReference type="InterPro" id="IPR014710">
    <property type="entry name" value="RmlC-like_jellyroll"/>
</dbReference>
<dbReference type="InterPro" id="IPR011051">
    <property type="entry name" value="RmlC_Cupin_sf"/>
</dbReference>
<dbReference type="InterPro" id="IPR050253">
    <property type="entry name" value="Seed_Storage-Functional"/>
</dbReference>
<dbReference type="PANTHER" id="PTHR31189:SF13">
    <property type="entry name" value="CUPINCIN"/>
    <property type="match status" value="1"/>
</dbReference>
<dbReference type="PANTHER" id="PTHR31189">
    <property type="entry name" value="OS03G0336100 PROTEIN-RELATED"/>
    <property type="match status" value="1"/>
</dbReference>
<dbReference type="Pfam" id="PF00190">
    <property type="entry name" value="Cupin_1"/>
    <property type="match status" value="2"/>
</dbReference>
<dbReference type="SMART" id="SM00835">
    <property type="entry name" value="Cupin_1"/>
    <property type="match status" value="2"/>
</dbReference>
<dbReference type="SUPFAM" id="SSF51182">
    <property type="entry name" value="RmlC-like cupins"/>
    <property type="match status" value="2"/>
</dbReference>
<keyword id="KW-0020">Allergen</keyword>
<keyword id="KW-0903">Direct protein sequencing</keyword>
<keyword id="KW-0325">Glycoprotein</keyword>
<keyword id="KW-1185">Reference proteome</keyword>
<keyword id="KW-0708">Seed storage protein</keyword>
<keyword id="KW-0732">Signal</keyword>
<keyword id="KW-0758">Storage protein</keyword>
<sequence>MAFKPKIPIALLLLTSLLAICAGLALAMQDPELKQCKHQCRHQRQFDEQEKEHCQRSCDEYHIEKKARERAERRRSEEGSSREEGYEEEELGGEREEENPYVFEDEDFETRVRTDEGRIQVLEKFTKRSKLLRGIENFRVAILEANPQTFISPAHFDAELVVFVAKGRATITTVREEKRENFNVEQGDIMRIPAGTPVYLINRDENEKLYIVKILRPVSVPGHFEAFHGSGGEDPESFYRAFSWEVLEAALKTRRDQLEKLFGKQTQGVIIKASKEQIRSMSKHEETTPRIWPFGGDSTHPFNLFHKRPSQSNQFGRLFETDPKECKQLQDLDLMVSFANITKGSMAGPYYNSRATKISVVIEGEGYFEMACPHLSSSGSRGQREGSGSSRRRSRSGPSYQQIRGRLRPGMVFVAPAGHPVAVIASRNKNLQVLCFDVNAQGNIRFPLAGKNNIVNEFEKEAKELAFNFPAREVEKIFRNQDQEFFFPGPSRQPEEGGRAFE</sequence>
<evidence type="ECO:0000255" key="1"/>
<evidence type="ECO:0000256" key="2">
    <source>
        <dbReference type="SAM" id="MobiDB-lite"/>
    </source>
</evidence>
<evidence type="ECO:0000269" key="3">
    <source>
    </source>
</evidence>
<evidence type="ECO:0000303" key="4">
    <source>
    </source>
</evidence>
<evidence type="ECO:0000305" key="5"/>
<evidence type="ECO:0000305" key="6">
    <source>
    </source>
</evidence>
<evidence type="ECO:0000312" key="7">
    <source>
        <dbReference type="Proteomes" id="UP000235220"/>
    </source>
</evidence>
<evidence type="ECO:0000312" key="8">
    <source>
        <dbReference type="RefSeq" id="XP_018814692.1"/>
    </source>
</evidence>